<sequence length="150" mass="17242">MKKNYYIGACIALILSGPTFAQGEMHNTNEQIAEQSSVDLIAEIYHSDRYAETFVESEQFEQEESTSKEPILFVTPYDQLKDKLESWADLHGYVVKWNTQKTVQFDNAVAYEGDFEQVLTELASDINQIGIDINFKIFQKNKVIVVYSVR</sequence>
<dbReference type="EMBL" id="X64098">
    <property type="protein sequence ID" value="CAA45457.1"/>
    <property type="molecule type" value="Genomic_DNA"/>
</dbReference>
<dbReference type="EMBL" id="X74730">
    <property type="protein sequence ID" value="CAA52747.1"/>
    <property type="molecule type" value="Genomic_DNA"/>
</dbReference>
<dbReference type="EMBL" id="AE003852">
    <property type="protein sequence ID" value="AAF93993.1"/>
    <property type="molecule type" value="Genomic_DNA"/>
</dbReference>
<dbReference type="PIR" id="JC4723">
    <property type="entry name" value="JC4723"/>
</dbReference>
<dbReference type="PIR" id="S23266">
    <property type="entry name" value="S23266"/>
</dbReference>
<dbReference type="RefSeq" id="NP_230478.1">
    <property type="nucleotide sequence ID" value="NC_002505.1"/>
</dbReference>
<dbReference type="RefSeq" id="WP_000742753.1">
    <property type="nucleotide sequence ID" value="NZ_LT906614.1"/>
</dbReference>
<dbReference type="SMR" id="P29490"/>
<dbReference type="STRING" id="243277.VC_0830"/>
<dbReference type="DNASU" id="2614497"/>
<dbReference type="EnsemblBacteria" id="AAF93993">
    <property type="protein sequence ID" value="AAF93993"/>
    <property type="gene ID" value="VC_0830"/>
</dbReference>
<dbReference type="KEGG" id="vch:VC_0830"/>
<dbReference type="PATRIC" id="fig|243277.26.peg.791"/>
<dbReference type="eggNOG" id="ENOG5031NZC">
    <property type="taxonomic scope" value="Bacteria"/>
</dbReference>
<dbReference type="HOGENOM" id="CLU_1980675_0_0_6"/>
<dbReference type="Proteomes" id="UP000000584">
    <property type="component" value="Chromosome 1"/>
</dbReference>
<dbReference type="InterPro" id="IPR018927">
    <property type="entry name" value="Pilus_synth_Q_C"/>
</dbReference>
<dbReference type="Pfam" id="PF10671">
    <property type="entry name" value="TcpQ"/>
    <property type="match status" value="1"/>
</dbReference>
<protein>
    <recommendedName>
        <fullName>Toxin coregulated pilus biosynthesis protein Q</fullName>
    </recommendedName>
    <alternativeName>
        <fullName>TCP pilus biosynthesis protein TcpQ</fullName>
    </alternativeName>
</protein>
<name>TCPQ_VIBCH</name>
<comment type="function">
    <text>Involved in TCP pilus biogenesis.</text>
</comment>
<accession>P29490</accession>
<accession>Q56666</accession>
<organism>
    <name type="scientific">Vibrio cholerae serotype O1 (strain ATCC 39315 / El Tor Inaba N16961)</name>
    <dbReference type="NCBI Taxonomy" id="243277"/>
    <lineage>
        <taxon>Bacteria</taxon>
        <taxon>Pseudomonadati</taxon>
        <taxon>Pseudomonadota</taxon>
        <taxon>Gammaproteobacteria</taxon>
        <taxon>Vibrionales</taxon>
        <taxon>Vibrionaceae</taxon>
        <taxon>Vibrio</taxon>
    </lineage>
</organism>
<feature type="chain" id="PRO_0000072468" description="Toxin coregulated pilus biosynthesis protein Q">
    <location>
        <begin position="1"/>
        <end position="150"/>
    </location>
</feature>
<feature type="sequence variant" description="In strain: Z17561.">
    <original>N</original>
    <variation>K</variation>
    <location>
        <position position="27"/>
    </location>
</feature>
<feature type="sequence variant" description="In strain: Z17561.">
    <original>V</original>
    <variation>I</variation>
    <location>
        <position position="55"/>
    </location>
</feature>
<feature type="sequence variant" description="In strain: Z17561.">
    <original>Q</original>
    <variation>E</variation>
    <location>
        <position position="59"/>
    </location>
</feature>
<feature type="sequence variant" description="In strain: Z17561.">
    <original>T</original>
    <variation>P</variation>
    <location>
        <position position="66"/>
    </location>
</feature>
<feature type="sequence variant" description="In strain: Z17561.">
    <original>E</original>
    <variation>D</variation>
    <location>
        <position position="69"/>
    </location>
</feature>
<gene>
    <name type="primary">tcpQ</name>
    <name type="ordered locus">VC_0830</name>
</gene>
<proteinExistence type="predicted"/>
<keyword id="KW-1185">Reference proteome</keyword>
<reference key="1">
    <citation type="journal article" date="1996" name="Gene">
        <title>Comparison of the promoter proximal regions of the toxin-co-regulated tcp gene cluster in classical and El Tor strains of Vibrio cholerae O1.</title>
        <authorList>
            <person name="Ogierman M.A."/>
            <person name="Voss E."/>
            <person name="Meaney C."/>
            <person name="Faast R."/>
            <person name="Attridge S.R."/>
            <person name="Manning P.A."/>
        </authorList>
    </citation>
    <scope>NUCLEOTIDE SEQUENCE [GENOMIC DNA]</scope>
    <source>
        <strain>Classical Inaba Z17561 / Serotype O1</strain>
        <strain>El Tor H1 / Serotype O1</strain>
    </source>
</reference>
<reference key="2">
    <citation type="journal article" date="2000" name="Nature">
        <title>DNA sequence of both chromosomes of the cholera pathogen Vibrio cholerae.</title>
        <authorList>
            <person name="Heidelberg J.F."/>
            <person name="Eisen J.A."/>
            <person name="Nelson W.C."/>
            <person name="Clayton R.A."/>
            <person name="Gwinn M.L."/>
            <person name="Dodson R.J."/>
            <person name="Haft D.H."/>
            <person name="Hickey E.K."/>
            <person name="Peterson J.D."/>
            <person name="Umayam L.A."/>
            <person name="Gill S.R."/>
            <person name="Nelson K.E."/>
            <person name="Read T.D."/>
            <person name="Tettelin H."/>
            <person name="Richardson D.L."/>
            <person name="Ermolaeva M.D."/>
            <person name="Vamathevan J.J."/>
            <person name="Bass S."/>
            <person name="Qin H."/>
            <person name="Dragoi I."/>
            <person name="Sellers P."/>
            <person name="McDonald L.A."/>
            <person name="Utterback T.R."/>
            <person name="Fleischmann R.D."/>
            <person name="Nierman W.C."/>
            <person name="White O."/>
            <person name="Salzberg S.L."/>
            <person name="Smith H.O."/>
            <person name="Colwell R.R."/>
            <person name="Mekalanos J.J."/>
            <person name="Venter J.C."/>
            <person name="Fraser C.M."/>
        </authorList>
    </citation>
    <scope>NUCLEOTIDE SEQUENCE [LARGE SCALE GENOMIC DNA]</scope>
    <source>
        <strain>ATCC 39315 / El Tor Inaba N16961</strain>
    </source>
</reference>